<reference key="1">
    <citation type="journal article" date="1995" name="Science">
        <title>Whole-genome random sequencing and assembly of Haemophilus influenzae Rd.</title>
        <authorList>
            <person name="Fleischmann R.D."/>
            <person name="Adams M.D."/>
            <person name="White O."/>
            <person name="Clayton R.A."/>
            <person name="Kirkness E.F."/>
            <person name="Kerlavage A.R."/>
            <person name="Bult C.J."/>
            <person name="Tomb J.-F."/>
            <person name="Dougherty B.A."/>
            <person name="Merrick J.M."/>
            <person name="McKenney K."/>
            <person name="Sutton G.G."/>
            <person name="FitzHugh W."/>
            <person name="Fields C.A."/>
            <person name="Gocayne J.D."/>
            <person name="Scott J.D."/>
            <person name="Shirley R."/>
            <person name="Liu L.-I."/>
            <person name="Glodek A."/>
            <person name="Kelley J.M."/>
            <person name="Weidman J.F."/>
            <person name="Phillips C.A."/>
            <person name="Spriggs T."/>
            <person name="Hedblom E."/>
            <person name="Cotton M.D."/>
            <person name="Utterback T.R."/>
            <person name="Hanna M.C."/>
            <person name="Nguyen D.T."/>
            <person name="Saudek D.M."/>
            <person name="Brandon R.C."/>
            <person name="Fine L.D."/>
            <person name="Fritchman J.L."/>
            <person name="Fuhrmann J.L."/>
            <person name="Geoghagen N.S.M."/>
            <person name="Gnehm C.L."/>
            <person name="McDonald L.A."/>
            <person name="Small K.V."/>
            <person name="Fraser C.M."/>
            <person name="Smith H.O."/>
            <person name="Venter J.C."/>
        </authorList>
    </citation>
    <scope>NUCLEOTIDE SEQUENCE [LARGE SCALE GENOMIC DNA]</scope>
    <source>
        <strain>ATCC 51907 / DSM 11121 / KW20 / Rd</strain>
    </source>
</reference>
<keyword id="KW-0255">Endonuclease</keyword>
<keyword id="KW-0378">Hydrolase</keyword>
<keyword id="KW-0540">Nuclease</keyword>
<keyword id="KW-1185">Reference proteome</keyword>
<keyword id="KW-0732">Signal</keyword>
<comment type="similarity">
    <text evidence="2">Belongs to the thermonuclease family.</text>
</comment>
<gene>
    <name type="ordered locus">HI_1296</name>
</gene>
<protein>
    <recommendedName>
        <fullName>Uncharacterized endonuclease HI_1296</fullName>
        <ecNumber>3.1.-.-</ecNumber>
    </recommendedName>
</protein>
<name>Y1296_HAEIN</name>
<accession>Q57519</accession>
<accession>O05055</accession>
<organism>
    <name type="scientific">Haemophilus influenzae (strain ATCC 51907 / DSM 11121 / KW20 / Rd)</name>
    <dbReference type="NCBI Taxonomy" id="71421"/>
    <lineage>
        <taxon>Bacteria</taxon>
        <taxon>Pseudomonadati</taxon>
        <taxon>Pseudomonadota</taxon>
        <taxon>Gammaproteobacteria</taxon>
        <taxon>Pasteurellales</taxon>
        <taxon>Pasteurellaceae</taxon>
        <taxon>Haemophilus</taxon>
    </lineage>
</organism>
<sequence length="178" mass="20441">MINRKILLTSLLLIFTVLSACSREKNTCRVVKISDGDTLTCLTKGNKSIKVRLAEIDAPEKSQAFGQKSKKTLSDLVYQKNVRLARKGKDRYQRTLAVVYYQKQNINLEMVKQGMAWAYKQYSHDPIYLQAQENAQAKGIGLWADNNPIEPSQWRRQEKINMAFDYQTFPSSISLFPT</sequence>
<proteinExistence type="inferred from homology"/>
<dbReference type="EC" id="3.1.-.-"/>
<dbReference type="EMBL" id="L42023">
    <property type="protein sequence ID" value="AAC22942.1"/>
    <property type="molecule type" value="Genomic_DNA"/>
</dbReference>
<dbReference type="PIR" id="A64115">
    <property type="entry name" value="A64115"/>
</dbReference>
<dbReference type="RefSeq" id="NP_439447.2">
    <property type="nucleotide sequence ID" value="NC_000907.1"/>
</dbReference>
<dbReference type="SMR" id="Q57519"/>
<dbReference type="STRING" id="71421.HI_1296"/>
<dbReference type="EnsemblBacteria" id="AAC22942">
    <property type="protein sequence ID" value="AAC22942"/>
    <property type="gene ID" value="HI_1296"/>
</dbReference>
<dbReference type="KEGG" id="hin:HI_1296"/>
<dbReference type="PATRIC" id="fig|71421.8.peg.1347"/>
<dbReference type="eggNOG" id="COG1525">
    <property type="taxonomic scope" value="Bacteria"/>
</dbReference>
<dbReference type="HOGENOM" id="CLU_046484_7_3_6"/>
<dbReference type="OrthoDB" id="9805504at2"/>
<dbReference type="PhylomeDB" id="Q57519"/>
<dbReference type="Proteomes" id="UP000000579">
    <property type="component" value="Chromosome"/>
</dbReference>
<dbReference type="GO" id="GO:0004519">
    <property type="term" value="F:endonuclease activity"/>
    <property type="evidence" value="ECO:0007669"/>
    <property type="project" value="UniProtKB-KW"/>
</dbReference>
<dbReference type="GO" id="GO:0003676">
    <property type="term" value="F:nucleic acid binding"/>
    <property type="evidence" value="ECO:0007669"/>
    <property type="project" value="InterPro"/>
</dbReference>
<dbReference type="CDD" id="cd00175">
    <property type="entry name" value="SNc"/>
    <property type="match status" value="1"/>
</dbReference>
<dbReference type="Gene3D" id="2.40.50.90">
    <property type="match status" value="1"/>
</dbReference>
<dbReference type="InterPro" id="IPR035437">
    <property type="entry name" value="SNase_OB-fold_sf"/>
</dbReference>
<dbReference type="InterPro" id="IPR016071">
    <property type="entry name" value="Staphylococal_nuclease_OB-fold"/>
</dbReference>
<dbReference type="InterPro" id="IPR002071">
    <property type="entry name" value="Thermonucl_AS"/>
</dbReference>
<dbReference type="PANTHER" id="PTHR12302">
    <property type="entry name" value="EBNA2 BINDING PROTEIN P100"/>
    <property type="match status" value="1"/>
</dbReference>
<dbReference type="PANTHER" id="PTHR12302:SF3">
    <property type="entry name" value="SERINE_THREONINE-PROTEIN KINASE 31"/>
    <property type="match status" value="1"/>
</dbReference>
<dbReference type="Pfam" id="PF00565">
    <property type="entry name" value="SNase"/>
    <property type="match status" value="1"/>
</dbReference>
<dbReference type="SMART" id="SM00318">
    <property type="entry name" value="SNc"/>
    <property type="match status" value="1"/>
</dbReference>
<dbReference type="SUPFAM" id="SSF50199">
    <property type="entry name" value="Staphylococcal nuclease"/>
    <property type="match status" value="1"/>
</dbReference>
<dbReference type="PROSITE" id="PS51257">
    <property type="entry name" value="PROKAR_LIPOPROTEIN"/>
    <property type="match status" value="1"/>
</dbReference>
<dbReference type="PROSITE" id="PS01123">
    <property type="entry name" value="TNASE_1"/>
    <property type="match status" value="1"/>
</dbReference>
<dbReference type="PROSITE" id="PS01284">
    <property type="entry name" value="TNASE_2"/>
    <property type="match status" value="1"/>
</dbReference>
<dbReference type="PROSITE" id="PS50830">
    <property type="entry name" value="TNASE_3"/>
    <property type="match status" value="1"/>
</dbReference>
<evidence type="ECO:0000250" key="1"/>
<evidence type="ECO:0000255" key="2">
    <source>
        <dbReference type="PROSITE-ProRule" id="PRU00272"/>
    </source>
</evidence>
<evidence type="ECO:0000255" key="3">
    <source>
        <dbReference type="PROSITE-ProRule" id="PRU00303"/>
    </source>
</evidence>
<feature type="signal peptide" evidence="3">
    <location>
        <begin position="1"/>
        <end position="19"/>
    </location>
</feature>
<feature type="chain" id="PRO_0000034397" description="Uncharacterized endonuclease HI_1296">
    <location>
        <begin position="20"/>
        <end position="178"/>
    </location>
</feature>
<feature type="active site" evidence="1">
    <location>
        <position position="52"/>
    </location>
</feature>
<feature type="active site" evidence="1">
    <location>
        <position position="60"/>
    </location>
</feature>
<feature type="active site" evidence="1">
    <location>
        <position position="94"/>
    </location>
</feature>